<reference key="1">
    <citation type="journal article" date="2007" name="J. Bacteriol.">
        <title>Genome-wide transcriptional changes in Streptococcus gordonii in response to competence signaling peptide.</title>
        <authorList>
            <person name="Vickerman M.M."/>
            <person name="Iobst S."/>
            <person name="Jesionowski A.M."/>
            <person name="Gill S.R."/>
        </authorList>
    </citation>
    <scope>NUCLEOTIDE SEQUENCE [LARGE SCALE GENOMIC DNA]</scope>
    <source>
        <strain>Challis / ATCC 35105 / BCRC 15272 / CH1 / DL1 / V288</strain>
    </source>
</reference>
<proteinExistence type="inferred from homology"/>
<accession>A8AXM7</accession>
<sequence>MTLAKEIARDLLKIKAVYLKPEEPFTWASGIQSPIYTDNRVTLAYPETRTLIEDGFVEKIRAEFPDVEVIAGTATAGIPHGAIIADKMNLPFAYIRSKPKDHGAGNQIEGRVAPGQKMVVIEDLISTGGSVLDAIAAAKREGADVIGAAAIFTYELPKADKNFNDAGVKLVTLSNYTELIHLAEQEGYINAEGLALLKRFKEDQENWHL</sequence>
<name>PYRE_STRGC</name>
<feature type="chain" id="PRO_1000085552" description="Orotate phosphoribosyltransferase">
    <location>
        <begin position="1"/>
        <end position="209"/>
    </location>
</feature>
<feature type="binding site" evidence="1">
    <location>
        <position position="96"/>
    </location>
    <ligand>
        <name>5-phospho-alpha-D-ribose 1-diphosphate</name>
        <dbReference type="ChEBI" id="CHEBI:58017"/>
        <note>ligand shared between dimeric partners</note>
    </ligand>
</feature>
<feature type="binding site" evidence="1">
    <location>
        <position position="100"/>
    </location>
    <ligand>
        <name>5-phospho-alpha-D-ribose 1-diphosphate</name>
        <dbReference type="ChEBI" id="CHEBI:58017"/>
        <note>ligand shared between dimeric partners</note>
    </ligand>
</feature>
<feature type="binding site" evidence="1">
    <location>
        <position position="102"/>
    </location>
    <ligand>
        <name>5-phospho-alpha-D-ribose 1-diphosphate</name>
        <dbReference type="ChEBI" id="CHEBI:58017"/>
        <note>ligand shared between dimeric partners</note>
    </ligand>
</feature>
<feature type="binding site" description="in other chain" evidence="1">
    <location>
        <begin position="122"/>
        <end position="130"/>
    </location>
    <ligand>
        <name>5-phospho-alpha-D-ribose 1-diphosphate</name>
        <dbReference type="ChEBI" id="CHEBI:58017"/>
        <note>ligand shared between dimeric partners</note>
    </ligand>
</feature>
<feature type="binding site" evidence="1">
    <location>
        <position position="126"/>
    </location>
    <ligand>
        <name>orotate</name>
        <dbReference type="ChEBI" id="CHEBI:30839"/>
    </ligand>
</feature>
<dbReference type="EC" id="2.4.2.10" evidence="1"/>
<dbReference type="EMBL" id="CP000725">
    <property type="protein sequence ID" value="ABV09647.1"/>
    <property type="molecule type" value="Genomic_DNA"/>
</dbReference>
<dbReference type="RefSeq" id="WP_012000648.1">
    <property type="nucleotide sequence ID" value="NC_009785.1"/>
</dbReference>
<dbReference type="SMR" id="A8AXM7"/>
<dbReference type="STRING" id="467705.SGO_1253"/>
<dbReference type="KEGG" id="sgo:SGO_1253"/>
<dbReference type="eggNOG" id="COG0461">
    <property type="taxonomic scope" value="Bacteria"/>
</dbReference>
<dbReference type="HOGENOM" id="CLU_074878_1_1_9"/>
<dbReference type="UniPathway" id="UPA00070">
    <property type="reaction ID" value="UER00119"/>
</dbReference>
<dbReference type="Proteomes" id="UP000001131">
    <property type="component" value="Chromosome"/>
</dbReference>
<dbReference type="GO" id="GO:0000287">
    <property type="term" value="F:magnesium ion binding"/>
    <property type="evidence" value="ECO:0007669"/>
    <property type="project" value="UniProtKB-UniRule"/>
</dbReference>
<dbReference type="GO" id="GO:0004588">
    <property type="term" value="F:orotate phosphoribosyltransferase activity"/>
    <property type="evidence" value="ECO:0007669"/>
    <property type="project" value="UniProtKB-UniRule"/>
</dbReference>
<dbReference type="GO" id="GO:0044205">
    <property type="term" value="P:'de novo' UMP biosynthetic process"/>
    <property type="evidence" value="ECO:0007669"/>
    <property type="project" value="UniProtKB-UniRule"/>
</dbReference>
<dbReference type="GO" id="GO:0019856">
    <property type="term" value="P:pyrimidine nucleobase biosynthetic process"/>
    <property type="evidence" value="ECO:0007669"/>
    <property type="project" value="TreeGrafter"/>
</dbReference>
<dbReference type="CDD" id="cd06223">
    <property type="entry name" value="PRTases_typeI"/>
    <property type="match status" value="1"/>
</dbReference>
<dbReference type="Gene3D" id="3.40.50.2020">
    <property type="match status" value="1"/>
</dbReference>
<dbReference type="HAMAP" id="MF_01208">
    <property type="entry name" value="PyrE"/>
    <property type="match status" value="1"/>
</dbReference>
<dbReference type="InterPro" id="IPR023031">
    <property type="entry name" value="OPRT"/>
</dbReference>
<dbReference type="InterPro" id="IPR004467">
    <property type="entry name" value="Or_phspho_trans_dom"/>
</dbReference>
<dbReference type="InterPro" id="IPR000836">
    <property type="entry name" value="PRibTrfase_dom"/>
</dbReference>
<dbReference type="InterPro" id="IPR029057">
    <property type="entry name" value="PRTase-like"/>
</dbReference>
<dbReference type="NCBIfam" id="TIGR00336">
    <property type="entry name" value="pyrE"/>
    <property type="match status" value="1"/>
</dbReference>
<dbReference type="PANTHER" id="PTHR19278">
    <property type="entry name" value="OROTATE PHOSPHORIBOSYLTRANSFERASE"/>
    <property type="match status" value="1"/>
</dbReference>
<dbReference type="PANTHER" id="PTHR19278:SF9">
    <property type="entry name" value="URIDINE 5'-MONOPHOSPHATE SYNTHASE"/>
    <property type="match status" value="1"/>
</dbReference>
<dbReference type="Pfam" id="PF00156">
    <property type="entry name" value="Pribosyltran"/>
    <property type="match status" value="1"/>
</dbReference>
<dbReference type="SUPFAM" id="SSF53271">
    <property type="entry name" value="PRTase-like"/>
    <property type="match status" value="1"/>
</dbReference>
<dbReference type="PROSITE" id="PS00103">
    <property type="entry name" value="PUR_PYR_PR_TRANSFER"/>
    <property type="match status" value="1"/>
</dbReference>
<gene>
    <name evidence="1" type="primary">pyrE</name>
    <name type="ordered locus">SGO_1253</name>
</gene>
<protein>
    <recommendedName>
        <fullName evidence="1">Orotate phosphoribosyltransferase</fullName>
        <shortName evidence="1">OPRT</shortName>
        <shortName evidence="1">OPRTase</shortName>
        <ecNumber evidence="1">2.4.2.10</ecNumber>
    </recommendedName>
</protein>
<evidence type="ECO:0000255" key="1">
    <source>
        <dbReference type="HAMAP-Rule" id="MF_01208"/>
    </source>
</evidence>
<organism>
    <name type="scientific">Streptococcus gordonii (strain Challis / ATCC 35105 / BCRC 15272 / CH1 / DL1 / V288)</name>
    <dbReference type="NCBI Taxonomy" id="467705"/>
    <lineage>
        <taxon>Bacteria</taxon>
        <taxon>Bacillati</taxon>
        <taxon>Bacillota</taxon>
        <taxon>Bacilli</taxon>
        <taxon>Lactobacillales</taxon>
        <taxon>Streptococcaceae</taxon>
        <taxon>Streptococcus</taxon>
    </lineage>
</organism>
<keyword id="KW-0328">Glycosyltransferase</keyword>
<keyword id="KW-0460">Magnesium</keyword>
<keyword id="KW-0665">Pyrimidine biosynthesis</keyword>
<keyword id="KW-1185">Reference proteome</keyword>
<keyword id="KW-0808">Transferase</keyword>
<comment type="function">
    <text evidence="1">Catalyzes the transfer of a ribosyl phosphate group from 5-phosphoribose 1-diphosphate to orotate, leading to the formation of orotidine monophosphate (OMP).</text>
</comment>
<comment type="catalytic activity">
    <reaction evidence="1">
        <text>orotidine 5'-phosphate + diphosphate = orotate + 5-phospho-alpha-D-ribose 1-diphosphate</text>
        <dbReference type="Rhea" id="RHEA:10380"/>
        <dbReference type="ChEBI" id="CHEBI:30839"/>
        <dbReference type="ChEBI" id="CHEBI:33019"/>
        <dbReference type="ChEBI" id="CHEBI:57538"/>
        <dbReference type="ChEBI" id="CHEBI:58017"/>
        <dbReference type="EC" id="2.4.2.10"/>
    </reaction>
</comment>
<comment type="cofactor">
    <cofactor evidence="1">
        <name>Mg(2+)</name>
        <dbReference type="ChEBI" id="CHEBI:18420"/>
    </cofactor>
</comment>
<comment type="pathway">
    <text evidence="1">Pyrimidine metabolism; UMP biosynthesis via de novo pathway; UMP from orotate: step 1/2.</text>
</comment>
<comment type="subunit">
    <text evidence="1">Homodimer.</text>
</comment>
<comment type="similarity">
    <text evidence="1">Belongs to the purine/pyrimidine phosphoribosyltransferase family. PyrE subfamily.</text>
</comment>